<name>CHLL_PROM4</name>
<organism>
    <name type="scientific">Prochlorococcus marinus (strain MIT 9211)</name>
    <dbReference type="NCBI Taxonomy" id="93059"/>
    <lineage>
        <taxon>Bacteria</taxon>
        <taxon>Bacillati</taxon>
        <taxon>Cyanobacteriota</taxon>
        <taxon>Cyanophyceae</taxon>
        <taxon>Synechococcales</taxon>
        <taxon>Prochlorococcaceae</taxon>
        <taxon>Prochlorococcus</taxon>
    </lineage>
</organism>
<keyword id="KW-0004">4Fe-4S</keyword>
<keyword id="KW-0067">ATP-binding</keyword>
<keyword id="KW-0149">Chlorophyll biosynthesis</keyword>
<keyword id="KW-0408">Iron</keyword>
<keyword id="KW-0411">Iron-sulfur</keyword>
<keyword id="KW-0460">Magnesium</keyword>
<keyword id="KW-0479">Metal-binding</keyword>
<keyword id="KW-0547">Nucleotide-binding</keyword>
<keyword id="KW-0560">Oxidoreductase</keyword>
<keyword id="KW-0602">Photosynthesis</keyword>
<keyword id="KW-1185">Reference proteome</keyword>
<gene>
    <name evidence="1" type="primary">chlL</name>
    <name type="ordered locus">P9211_05451</name>
</gene>
<comment type="function">
    <text evidence="1">Component of the dark-operative protochlorophyllide reductase (DPOR) that uses Mg-ATP and reduced ferredoxin to reduce ring D of protochlorophyllide (Pchlide) to form chlorophyllide a (Chlide). This reaction is light-independent. The L component serves as a unique electron donor to the NB-component of the complex, and binds Mg-ATP.</text>
</comment>
<comment type="catalytic activity">
    <reaction evidence="1">
        <text>chlorophyllide a + oxidized 2[4Fe-4S]-[ferredoxin] + 2 ADP + 2 phosphate = protochlorophyllide a + reduced 2[4Fe-4S]-[ferredoxin] + 2 ATP + 2 H2O</text>
        <dbReference type="Rhea" id="RHEA:28202"/>
        <dbReference type="Rhea" id="RHEA-COMP:10002"/>
        <dbReference type="Rhea" id="RHEA-COMP:10004"/>
        <dbReference type="ChEBI" id="CHEBI:15377"/>
        <dbReference type="ChEBI" id="CHEBI:30616"/>
        <dbReference type="ChEBI" id="CHEBI:33722"/>
        <dbReference type="ChEBI" id="CHEBI:33723"/>
        <dbReference type="ChEBI" id="CHEBI:43474"/>
        <dbReference type="ChEBI" id="CHEBI:83348"/>
        <dbReference type="ChEBI" id="CHEBI:83350"/>
        <dbReference type="ChEBI" id="CHEBI:456216"/>
        <dbReference type="EC" id="1.3.7.7"/>
    </reaction>
</comment>
<comment type="cofactor">
    <cofactor evidence="1">
        <name>[4Fe-4S] cluster</name>
        <dbReference type="ChEBI" id="CHEBI:49883"/>
    </cofactor>
    <text evidence="1">Binds 1 [4Fe-4S] cluster per dimer.</text>
</comment>
<comment type="pathway">
    <text evidence="1">Porphyrin-containing compound metabolism; chlorophyll biosynthesis (light-independent).</text>
</comment>
<comment type="subunit">
    <text evidence="1">Homodimer. Protochlorophyllide reductase is composed of three subunits; ChlL, ChlN and ChlB.</text>
</comment>
<comment type="similarity">
    <text evidence="1">Belongs to the NifH/BchL/ChlL family.</text>
</comment>
<sequence>MTTTLASRPDGEGSVQVKLDPKVNIEEGALVIAVYGKGGIGKSTTSSNLSAAFSKLGKKVLQIGCDPKHDSTFTLTHKMVPTVIDILEEVDFHSEELRPEDFMFKGFNGVQCVESGGPPAGTGCGGYVTGQTVKLLKEHHLLEDTDVVIFDVLGDVVCGGFAAPLQHANYCLIVTANDFDSIFAMNRIVAAINAKAKNYKVRLGGVIANRSADLDQIEKFNERTGLKTMAHFRNVDAIRRSRLKKCTIFEMDPEEEGVKEVQNEYLSLAKKMIDNVEPLEVEPLKDREIFDLLGFD</sequence>
<reference key="1">
    <citation type="journal article" date="2007" name="PLoS Genet.">
        <title>Patterns and implications of gene gain and loss in the evolution of Prochlorococcus.</title>
        <authorList>
            <person name="Kettler G.C."/>
            <person name="Martiny A.C."/>
            <person name="Huang K."/>
            <person name="Zucker J."/>
            <person name="Coleman M.L."/>
            <person name="Rodrigue S."/>
            <person name="Chen F."/>
            <person name="Lapidus A."/>
            <person name="Ferriera S."/>
            <person name="Johnson J."/>
            <person name="Steglich C."/>
            <person name="Church G.M."/>
            <person name="Richardson P."/>
            <person name="Chisholm S.W."/>
        </authorList>
    </citation>
    <scope>NUCLEOTIDE SEQUENCE [LARGE SCALE GENOMIC DNA]</scope>
    <source>
        <strain>MIT 9211</strain>
    </source>
</reference>
<protein>
    <recommendedName>
        <fullName evidence="1">Light-independent protochlorophyllide reductase iron-sulfur ATP-binding protein</fullName>
        <shortName evidence="1">DPOR subunit L</shortName>
        <shortName evidence="1">LI-POR subunit L</shortName>
        <ecNumber evidence="1">1.3.7.7</ecNumber>
    </recommendedName>
</protein>
<dbReference type="EC" id="1.3.7.7" evidence="1"/>
<dbReference type="EMBL" id="CP000878">
    <property type="protein sequence ID" value="ABX08476.1"/>
    <property type="molecule type" value="Genomic_DNA"/>
</dbReference>
<dbReference type="RefSeq" id="WP_012195099.1">
    <property type="nucleotide sequence ID" value="NC_009976.1"/>
</dbReference>
<dbReference type="SMR" id="A9BEG6"/>
<dbReference type="STRING" id="93059.P9211_05451"/>
<dbReference type="KEGG" id="pmj:P9211_05451"/>
<dbReference type="eggNOG" id="COG1348">
    <property type="taxonomic scope" value="Bacteria"/>
</dbReference>
<dbReference type="HOGENOM" id="CLU_059373_2_0_3"/>
<dbReference type="OrthoDB" id="9778641at2"/>
<dbReference type="UniPathway" id="UPA00670"/>
<dbReference type="Proteomes" id="UP000000788">
    <property type="component" value="Chromosome"/>
</dbReference>
<dbReference type="GO" id="GO:0051539">
    <property type="term" value="F:4 iron, 4 sulfur cluster binding"/>
    <property type="evidence" value="ECO:0007669"/>
    <property type="project" value="UniProtKB-UniRule"/>
</dbReference>
<dbReference type="GO" id="GO:0005524">
    <property type="term" value="F:ATP binding"/>
    <property type="evidence" value="ECO:0007669"/>
    <property type="project" value="UniProtKB-UniRule"/>
</dbReference>
<dbReference type="GO" id="GO:0046872">
    <property type="term" value="F:metal ion binding"/>
    <property type="evidence" value="ECO:0007669"/>
    <property type="project" value="UniProtKB-KW"/>
</dbReference>
<dbReference type="GO" id="GO:0016730">
    <property type="term" value="F:oxidoreductase activity, acting on iron-sulfur proteins as donors"/>
    <property type="evidence" value="ECO:0007669"/>
    <property type="project" value="InterPro"/>
</dbReference>
<dbReference type="GO" id="GO:0016636">
    <property type="term" value="F:oxidoreductase activity, acting on the CH-CH group of donors, iron-sulfur protein as acceptor"/>
    <property type="evidence" value="ECO:0007669"/>
    <property type="project" value="UniProtKB-UniRule"/>
</dbReference>
<dbReference type="GO" id="GO:0036068">
    <property type="term" value="P:light-independent chlorophyll biosynthetic process"/>
    <property type="evidence" value="ECO:0007669"/>
    <property type="project" value="UniProtKB-UniRule"/>
</dbReference>
<dbReference type="GO" id="GO:0019685">
    <property type="term" value="P:photosynthesis, dark reaction"/>
    <property type="evidence" value="ECO:0007669"/>
    <property type="project" value="InterPro"/>
</dbReference>
<dbReference type="CDD" id="cd02032">
    <property type="entry name" value="Bchl-like"/>
    <property type="match status" value="1"/>
</dbReference>
<dbReference type="Gene3D" id="3.40.50.300">
    <property type="entry name" value="P-loop containing nucleotide triphosphate hydrolases"/>
    <property type="match status" value="1"/>
</dbReference>
<dbReference type="HAMAP" id="MF_00355">
    <property type="entry name" value="ChlL_BchL"/>
    <property type="match status" value="1"/>
</dbReference>
<dbReference type="InterPro" id="IPR030655">
    <property type="entry name" value="NifH/chlL_CS"/>
</dbReference>
<dbReference type="InterPro" id="IPR000392">
    <property type="entry name" value="NifH/frxC"/>
</dbReference>
<dbReference type="InterPro" id="IPR027417">
    <property type="entry name" value="P-loop_NTPase"/>
</dbReference>
<dbReference type="InterPro" id="IPR005971">
    <property type="entry name" value="Protochlorophyllide_ATP-bd"/>
</dbReference>
<dbReference type="NCBIfam" id="TIGR01281">
    <property type="entry name" value="DPOR_bchL"/>
    <property type="match status" value="1"/>
</dbReference>
<dbReference type="PANTHER" id="PTHR42864">
    <property type="entry name" value="LIGHT-INDEPENDENT PROTOCHLOROPHYLLIDE REDUCTASE IRON-SULFUR ATP-BINDING PROTEIN"/>
    <property type="match status" value="1"/>
</dbReference>
<dbReference type="PANTHER" id="PTHR42864:SF2">
    <property type="entry name" value="LIGHT-INDEPENDENT PROTOCHLOROPHYLLIDE REDUCTASE IRON-SULFUR ATP-BINDING PROTEIN"/>
    <property type="match status" value="1"/>
</dbReference>
<dbReference type="Pfam" id="PF00142">
    <property type="entry name" value="Fer4_NifH"/>
    <property type="match status" value="1"/>
</dbReference>
<dbReference type="PIRSF" id="PIRSF000363">
    <property type="entry name" value="Nitrogenase_iron"/>
    <property type="match status" value="1"/>
</dbReference>
<dbReference type="PRINTS" id="PR00091">
    <property type="entry name" value="NITROGNASEII"/>
</dbReference>
<dbReference type="SUPFAM" id="SSF52540">
    <property type="entry name" value="P-loop containing nucleoside triphosphate hydrolases"/>
    <property type="match status" value="1"/>
</dbReference>
<dbReference type="PROSITE" id="PS00746">
    <property type="entry name" value="NIFH_FRXC_1"/>
    <property type="match status" value="1"/>
</dbReference>
<dbReference type="PROSITE" id="PS00692">
    <property type="entry name" value="NIFH_FRXC_2"/>
    <property type="match status" value="1"/>
</dbReference>
<dbReference type="PROSITE" id="PS51026">
    <property type="entry name" value="NIFH_FRXC_3"/>
    <property type="match status" value="1"/>
</dbReference>
<proteinExistence type="inferred from homology"/>
<accession>A9BEG6</accession>
<evidence type="ECO:0000255" key="1">
    <source>
        <dbReference type="HAMAP-Rule" id="MF_00355"/>
    </source>
</evidence>
<feature type="chain" id="PRO_1000120560" description="Light-independent protochlorophyllide reductase iron-sulfur ATP-binding protein">
    <location>
        <begin position="1"/>
        <end position="296"/>
    </location>
</feature>
<feature type="binding site" evidence="1">
    <location>
        <begin position="39"/>
        <end position="44"/>
    </location>
    <ligand>
        <name>ATP</name>
        <dbReference type="ChEBI" id="CHEBI:30616"/>
    </ligand>
</feature>
<feature type="binding site" evidence="1">
    <location>
        <position position="43"/>
    </location>
    <ligand>
        <name>Mg(2+)</name>
        <dbReference type="ChEBI" id="CHEBI:18420"/>
    </ligand>
</feature>
<feature type="binding site" evidence="1">
    <location>
        <position position="68"/>
    </location>
    <ligand>
        <name>ATP</name>
        <dbReference type="ChEBI" id="CHEBI:30616"/>
    </ligand>
</feature>
<feature type="binding site" evidence="1">
    <location>
        <position position="124"/>
    </location>
    <ligand>
        <name>[4Fe-4S] cluster</name>
        <dbReference type="ChEBI" id="CHEBI:49883"/>
        <note>ligand shared between dimeric partners</note>
    </ligand>
</feature>
<feature type="binding site" evidence="1">
    <location>
        <position position="158"/>
    </location>
    <ligand>
        <name>[4Fe-4S] cluster</name>
        <dbReference type="ChEBI" id="CHEBI:49883"/>
        <note>ligand shared between dimeric partners</note>
    </ligand>
</feature>
<feature type="binding site" evidence="1">
    <location>
        <begin position="209"/>
        <end position="210"/>
    </location>
    <ligand>
        <name>ATP</name>
        <dbReference type="ChEBI" id="CHEBI:30616"/>
    </ligand>
</feature>